<feature type="chain" id="PRO_1000192967" description="Peptidyl-tRNA hydrolase">
    <location>
        <begin position="1"/>
        <end position="194"/>
    </location>
</feature>
<feature type="active site" description="Proton acceptor" evidence="1">
    <location>
        <position position="21"/>
    </location>
</feature>
<feature type="binding site" evidence="1">
    <location>
        <position position="16"/>
    </location>
    <ligand>
        <name>tRNA</name>
        <dbReference type="ChEBI" id="CHEBI:17843"/>
    </ligand>
</feature>
<feature type="binding site" evidence="1">
    <location>
        <position position="67"/>
    </location>
    <ligand>
        <name>tRNA</name>
        <dbReference type="ChEBI" id="CHEBI:17843"/>
    </ligand>
</feature>
<feature type="binding site" evidence="1">
    <location>
        <position position="69"/>
    </location>
    <ligand>
        <name>tRNA</name>
        <dbReference type="ChEBI" id="CHEBI:17843"/>
    </ligand>
</feature>
<feature type="binding site" evidence="1">
    <location>
        <position position="115"/>
    </location>
    <ligand>
        <name>tRNA</name>
        <dbReference type="ChEBI" id="CHEBI:17843"/>
    </ligand>
</feature>
<feature type="site" description="Discriminates between blocked and unblocked aminoacyl-tRNA" evidence="1">
    <location>
        <position position="11"/>
    </location>
</feature>
<feature type="site" description="Stabilizes the basic form of H active site to accept a proton" evidence="1">
    <location>
        <position position="94"/>
    </location>
</feature>
<comment type="function">
    <text evidence="1">Hydrolyzes ribosome-free peptidyl-tRNAs (with 1 or more amino acids incorporated), which drop off the ribosome during protein synthesis, or as a result of ribosome stalling.</text>
</comment>
<comment type="function">
    <text evidence="1">Catalyzes the release of premature peptidyl moieties from peptidyl-tRNA molecules trapped in stalled 50S ribosomal subunits, and thus maintains levels of free tRNAs and 50S ribosomes.</text>
</comment>
<comment type="catalytic activity">
    <reaction evidence="1">
        <text>an N-acyl-L-alpha-aminoacyl-tRNA + H2O = an N-acyl-L-amino acid + a tRNA + H(+)</text>
        <dbReference type="Rhea" id="RHEA:54448"/>
        <dbReference type="Rhea" id="RHEA-COMP:10123"/>
        <dbReference type="Rhea" id="RHEA-COMP:13883"/>
        <dbReference type="ChEBI" id="CHEBI:15377"/>
        <dbReference type="ChEBI" id="CHEBI:15378"/>
        <dbReference type="ChEBI" id="CHEBI:59874"/>
        <dbReference type="ChEBI" id="CHEBI:78442"/>
        <dbReference type="ChEBI" id="CHEBI:138191"/>
        <dbReference type="EC" id="3.1.1.29"/>
    </reaction>
</comment>
<comment type="subunit">
    <text evidence="1">Monomer.</text>
</comment>
<comment type="subcellular location">
    <subcellularLocation>
        <location evidence="1">Cytoplasm</location>
    </subcellularLocation>
</comment>
<comment type="similarity">
    <text evidence="1">Belongs to the PTH family.</text>
</comment>
<proteinExistence type="inferred from homology"/>
<organism>
    <name type="scientific">Escherichia coli O17:K52:H18 (strain UMN026 / ExPEC)</name>
    <dbReference type="NCBI Taxonomy" id="585056"/>
    <lineage>
        <taxon>Bacteria</taxon>
        <taxon>Pseudomonadati</taxon>
        <taxon>Pseudomonadota</taxon>
        <taxon>Gammaproteobacteria</taxon>
        <taxon>Enterobacterales</taxon>
        <taxon>Enterobacteriaceae</taxon>
        <taxon>Escherichia</taxon>
    </lineage>
</organism>
<accession>B7N415</accession>
<dbReference type="EC" id="3.1.1.29" evidence="1"/>
<dbReference type="EMBL" id="CU928163">
    <property type="protein sequence ID" value="CAR12708.1"/>
    <property type="molecule type" value="Genomic_DNA"/>
</dbReference>
<dbReference type="RefSeq" id="WP_000152928.1">
    <property type="nucleotide sequence ID" value="NC_011751.1"/>
</dbReference>
<dbReference type="RefSeq" id="YP_002412245.1">
    <property type="nucleotide sequence ID" value="NC_011751.1"/>
</dbReference>
<dbReference type="SMR" id="B7N415"/>
<dbReference type="STRING" id="585056.ECUMN_1501"/>
<dbReference type="KEGG" id="eum:ECUMN_1501"/>
<dbReference type="PATRIC" id="fig|585056.7.peg.1699"/>
<dbReference type="HOGENOM" id="CLU_062456_3_1_6"/>
<dbReference type="Proteomes" id="UP000007097">
    <property type="component" value="Chromosome"/>
</dbReference>
<dbReference type="GO" id="GO:0005737">
    <property type="term" value="C:cytoplasm"/>
    <property type="evidence" value="ECO:0007669"/>
    <property type="project" value="UniProtKB-SubCell"/>
</dbReference>
<dbReference type="GO" id="GO:0004045">
    <property type="term" value="F:peptidyl-tRNA hydrolase activity"/>
    <property type="evidence" value="ECO:0007669"/>
    <property type="project" value="UniProtKB-UniRule"/>
</dbReference>
<dbReference type="GO" id="GO:0000049">
    <property type="term" value="F:tRNA binding"/>
    <property type="evidence" value="ECO:0007669"/>
    <property type="project" value="UniProtKB-UniRule"/>
</dbReference>
<dbReference type="GO" id="GO:0006515">
    <property type="term" value="P:protein quality control for misfolded or incompletely synthesized proteins"/>
    <property type="evidence" value="ECO:0007669"/>
    <property type="project" value="UniProtKB-UniRule"/>
</dbReference>
<dbReference type="GO" id="GO:0072344">
    <property type="term" value="P:rescue of stalled ribosome"/>
    <property type="evidence" value="ECO:0007669"/>
    <property type="project" value="UniProtKB-UniRule"/>
</dbReference>
<dbReference type="CDD" id="cd00462">
    <property type="entry name" value="PTH"/>
    <property type="match status" value="1"/>
</dbReference>
<dbReference type="FunFam" id="3.40.50.1470:FF:000001">
    <property type="entry name" value="Peptidyl-tRNA hydrolase"/>
    <property type="match status" value="1"/>
</dbReference>
<dbReference type="Gene3D" id="3.40.50.1470">
    <property type="entry name" value="Peptidyl-tRNA hydrolase"/>
    <property type="match status" value="1"/>
</dbReference>
<dbReference type="HAMAP" id="MF_00083">
    <property type="entry name" value="Pept_tRNA_hydro_bact"/>
    <property type="match status" value="1"/>
</dbReference>
<dbReference type="InterPro" id="IPR001328">
    <property type="entry name" value="Pept_tRNA_hydro"/>
</dbReference>
<dbReference type="InterPro" id="IPR018171">
    <property type="entry name" value="Pept_tRNA_hydro_CS"/>
</dbReference>
<dbReference type="InterPro" id="IPR036416">
    <property type="entry name" value="Pept_tRNA_hydro_sf"/>
</dbReference>
<dbReference type="NCBIfam" id="TIGR00447">
    <property type="entry name" value="pth"/>
    <property type="match status" value="1"/>
</dbReference>
<dbReference type="PANTHER" id="PTHR17224">
    <property type="entry name" value="PEPTIDYL-TRNA HYDROLASE"/>
    <property type="match status" value="1"/>
</dbReference>
<dbReference type="PANTHER" id="PTHR17224:SF1">
    <property type="entry name" value="PEPTIDYL-TRNA HYDROLASE"/>
    <property type="match status" value="1"/>
</dbReference>
<dbReference type="Pfam" id="PF01195">
    <property type="entry name" value="Pept_tRNA_hydro"/>
    <property type="match status" value="1"/>
</dbReference>
<dbReference type="SUPFAM" id="SSF53178">
    <property type="entry name" value="Peptidyl-tRNA hydrolase-like"/>
    <property type="match status" value="1"/>
</dbReference>
<dbReference type="PROSITE" id="PS01195">
    <property type="entry name" value="PEPT_TRNA_HYDROL_1"/>
    <property type="match status" value="1"/>
</dbReference>
<dbReference type="PROSITE" id="PS01196">
    <property type="entry name" value="PEPT_TRNA_HYDROL_2"/>
    <property type="match status" value="1"/>
</dbReference>
<reference key="1">
    <citation type="journal article" date="2009" name="PLoS Genet.">
        <title>Organised genome dynamics in the Escherichia coli species results in highly diverse adaptive paths.</title>
        <authorList>
            <person name="Touchon M."/>
            <person name="Hoede C."/>
            <person name="Tenaillon O."/>
            <person name="Barbe V."/>
            <person name="Baeriswyl S."/>
            <person name="Bidet P."/>
            <person name="Bingen E."/>
            <person name="Bonacorsi S."/>
            <person name="Bouchier C."/>
            <person name="Bouvet O."/>
            <person name="Calteau A."/>
            <person name="Chiapello H."/>
            <person name="Clermont O."/>
            <person name="Cruveiller S."/>
            <person name="Danchin A."/>
            <person name="Diard M."/>
            <person name="Dossat C."/>
            <person name="Karoui M.E."/>
            <person name="Frapy E."/>
            <person name="Garry L."/>
            <person name="Ghigo J.M."/>
            <person name="Gilles A.M."/>
            <person name="Johnson J."/>
            <person name="Le Bouguenec C."/>
            <person name="Lescat M."/>
            <person name="Mangenot S."/>
            <person name="Martinez-Jehanne V."/>
            <person name="Matic I."/>
            <person name="Nassif X."/>
            <person name="Oztas S."/>
            <person name="Petit M.A."/>
            <person name="Pichon C."/>
            <person name="Rouy Z."/>
            <person name="Ruf C.S."/>
            <person name="Schneider D."/>
            <person name="Tourret J."/>
            <person name="Vacherie B."/>
            <person name="Vallenet D."/>
            <person name="Medigue C."/>
            <person name="Rocha E.P.C."/>
            <person name="Denamur E."/>
        </authorList>
    </citation>
    <scope>NUCLEOTIDE SEQUENCE [LARGE SCALE GENOMIC DNA]</scope>
    <source>
        <strain>UMN026 / ExPEC</strain>
    </source>
</reference>
<keyword id="KW-0963">Cytoplasm</keyword>
<keyword id="KW-0378">Hydrolase</keyword>
<keyword id="KW-0694">RNA-binding</keyword>
<keyword id="KW-0820">tRNA-binding</keyword>
<name>PTH_ECOLU</name>
<evidence type="ECO:0000255" key="1">
    <source>
        <dbReference type="HAMAP-Rule" id="MF_00083"/>
    </source>
</evidence>
<sequence length="194" mass="21098">MTIKLIVGLANPGAEYAATRHNAGAWFVDLLAERLRAPLREEAKFFGYTSRVTLGGEDVRLLVPTTFMNLSGKAVAAMASFFRINPDEILVAHDELDLPLGVAKFKLGGGHGGHNGLKDIISKLGNNPNFHRLRIGIGHPGDKNKVVGFVLGKPPVSEQKLIDEAIDEAARCTEMWFTDGLTKATNRLHAFKAQ</sequence>
<gene>
    <name evidence="1" type="primary">pth</name>
    <name type="ordered locus">ECUMN_1501</name>
</gene>
<protein>
    <recommendedName>
        <fullName evidence="1">Peptidyl-tRNA hydrolase</fullName>
        <shortName evidence="1">Pth</shortName>
        <ecNumber evidence="1">3.1.1.29</ecNumber>
    </recommendedName>
</protein>